<accession>Q2IQ01</accession>
<name>PNP_ANADE</name>
<reference key="1">
    <citation type="submission" date="2006-01" db="EMBL/GenBank/DDBJ databases">
        <title>Complete sequence of Anaeromyxobacter dehalogenans 2CP-C.</title>
        <authorList>
            <person name="Copeland A."/>
            <person name="Lucas S."/>
            <person name="Lapidus A."/>
            <person name="Barry K."/>
            <person name="Detter J.C."/>
            <person name="Glavina T."/>
            <person name="Hammon N."/>
            <person name="Israni S."/>
            <person name="Pitluck S."/>
            <person name="Brettin T."/>
            <person name="Bruce D."/>
            <person name="Han C."/>
            <person name="Tapia R."/>
            <person name="Gilna P."/>
            <person name="Kiss H."/>
            <person name="Schmutz J."/>
            <person name="Larimer F."/>
            <person name="Land M."/>
            <person name="Kyrpides N."/>
            <person name="Anderson I."/>
            <person name="Sanford R.A."/>
            <person name="Ritalahti K.M."/>
            <person name="Thomas H.S."/>
            <person name="Kirby J.R."/>
            <person name="Zhulin I.B."/>
            <person name="Loeffler F.E."/>
            <person name="Richardson P."/>
        </authorList>
    </citation>
    <scope>NUCLEOTIDE SEQUENCE [LARGE SCALE GENOMIC DNA]</scope>
    <source>
        <strain>2CP-C</strain>
    </source>
</reference>
<protein>
    <recommendedName>
        <fullName evidence="1">Polyribonucleotide nucleotidyltransferase</fullName>
        <ecNumber evidence="1">2.7.7.8</ecNumber>
    </recommendedName>
    <alternativeName>
        <fullName evidence="1">Polynucleotide phosphorylase</fullName>
        <shortName evidence="1">PNPase</shortName>
    </alternativeName>
</protein>
<dbReference type="EC" id="2.7.7.8" evidence="1"/>
<dbReference type="EMBL" id="CP000251">
    <property type="protein sequence ID" value="ABC80882.1"/>
    <property type="status" value="ALT_INIT"/>
    <property type="molecule type" value="Genomic_DNA"/>
</dbReference>
<dbReference type="RefSeq" id="WP_041453348.1">
    <property type="nucleotide sequence ID" value="NC_007760.1"/>
</dbReference>
<dbReference type="SMR" id="Q2IQ01"/>
<dbReference type="STRING" id="290397.Adeh_1107"/>
<dbReference type="KEGG" id="ade:Adeh_1107"/>
<dbReference type="eggNOG" id="COG1185">
    <property type="taxonomic scope" value="Bacteria"/>
</dbReference>
<dbReference type="HOGENOM" id="CLU_004217_2_2_7"/>
<dbReference type="OrthoDB" id="9804305at2"/>
<dbReference type="Proteomes" id="UP000001935">
    <property type="component" value="Chromosome"/>
</dbReference>
<dbReference type="GO" id="GO:0005829">
    <property type="term" value="C:cytosol"/>
    <property type="evidence" value="ECO:0007669"/>
    <property type="project" value="TreeGrafter"/>
</dbReference>
<dbReference type="GO" id="GO:0000175">
    <property type="term" value="F:3'-5'-RNA exonuclease activity"/>
    <property type="evidence" value="ECO:0007669"/>
    <property type="project" value="TreeGrafter"/>
</dbReference>
<dbReference type="GO" id="GO:0000287">
    <property type="term" value="F:magnesium ion binding"/>
    <property type="evidence" value="ECO:0007669"/>
    <property type="project" value="UniProtKB-UniRule"/>
</dbReference>
<dbReference type="GO" id="GO:0004654">
    <property type="term" value="F:polyribonucleotide nucleotidyltransferase activity"/>
    <property type="evidence" value="ECO:0007669"/>
    <property type="project" value="UniProtKB-UniRule"/>
</dbReference>
<dbReference type="GO" id="GO:0003723">
    <property type="term" value="F:RNA binding"/>
    <property type="evidence" value="ECO:0007669"/>
    <property type="project" value="UniProtKB-UniRule"/>
</dbReference>
<dbReference type="GO" id="GO:0006402">
    <property type="term" value="P:mRNA catabolic process"/>
    <property type="evidence" value="ECO:0007669"/>
    <property type="project" value="UniProtKB-UniRule"/>
</dbReference>
<dbReference type="GO" id="GO:0006396">
    <property type="term" value="P:RNA processing"/>
    <property type="evidence" value="ECO:0007669"/>
    <property type="project" value="InterPro"/>
</dbReference>
<dbReference type="CDD" id="cd02393">
    <property type="entry name" value="KH-I_PNPase"/>
    <property type="match status" value="1"/>
</dbReference>
<dbReference type="CDD" id="cd11363">
    <property type="entry name" value="RNase_PH_PNPase_1"/>
    <property type="match status" value="1"/>
</dbReference>
<dbReference type="CDD" id="cd11364">
    <property type="entry name" value="RNase_PH_PNPase_2"/>
    <property type="match status" value="1"/>
</dbReference>
<dbReference type="CDD" id="cd04472">
    <property type="entry name" value="S1_PNPase"/>
    <property type="match status" value="1"/>
</dbReference>
<dbReference type="FunFam" id="2.40.50.140:FF:000023">
    <property type="entry name" value="Polyribonucleotide nucleotidyltransferase"/>
    <property type="match status" value="1"/>
</dbReference>
<dbReference type="FunFam" id="3.30.1370.10:FF:000001">
    <property type="entry name" value="Polyribonucleotide nucleotidyltransferase"/>
    <property type="match status" value="1"/>
</dbReference>
<dbReference type="FunFam" id="3.30.230.70:FF:000001">
    <property type="entry name" value="Polyribonucleotide nucleotidyltransferase"/>
    <property type="match status" value="1"/>
</dbReference>
<dbReference type="FunFam" id="3.30.230.70:FF:000002">
    <property type="entry name" value="Polyribonucleotide nucleotidyltransferase"/>
    <property type="match status" value="1"/>
</dbReference>
<dbReference type="Gene3D" id="3.30.230.70">
    <property type="entry name" value="GHMP Kinase, N-terminal domain"/>
    <property type="match status" value="2"/>
</dbReference>
<dbReference type="Gene3D" id="3.30.1370.10">
    <property type="entry name" value="K Homology domain, type 1"/>
    <property type="match status" value="1"/>
</dbReference>
<dbReference type="Gene3D" id="2.40.50.140">
    <property type="entry name" value="Nucleic acid-binding proteins"/>
    <property type="match status" value="1"/>
</dbReference>
<dbReference type="HAMAP" id="MF_01595">
    <property type="entry name" value="PNPase"/>
    <property type="match status" value="1"/>
</dbReference>
<dbReference type="InterPro" id="IPR001247">
    <property type="entry name" value="ExoRNase_PH_dom1"/>
</dbReference>
<dbReference type="InterPro" id="IPR015847">
    <property type="entry name" value="ExoRNase_PH_dom2"/>
</dbReference>
<dbReference type="InterPro" id="IPR036345">
    <property type="entry name" value="ExoRNase_PH_dom2_sf"/>
</dbReference>
<dbReference type="InterPro" id="IPR004087">
    <property type="entry name" value="KH_dom"/>
</dbReference>
<dbReference type="InterPro" id="IPR004088">
    <property type="entry name" value="KH_dom_type_1"/>
</dbReference>
<dbReference type="InterPro" id="IPR036612">
    <property type="entry name" value="KH_dom_type_1_sf"/>
</dbReference>
<dbReference type="InterPro" id="IPR012340">
    <property type="entry name" value="NA-bd_OB-fold"/>
</dbReference>
<dbReference type="InterPro" id="IPR012162">
    <property type="entry name" value="PNPase"/>
</dbReference>
<dbReference type="InterPro" id="IPR027408">
    <property type="entry name" value="PNPase/RNase_PH_dom_sf"/>
</dbReference>
<dbReference type="InterPro" id="IPR015848">
    <property type="entry name" value="PNPase_PH_RNA-bd_bac/org-type"/>
</dbReference>
<dbReference type="InterPro" id="IPR036456">
    <property type="entry name" value="PNPase_PH_RNA-bd_sf"/>
</dbReference>
<dbReference type="InterPro" id="IPR020568">
    <property type="entry name" value="Ribosomal_Su5_D2-typ_SF"/>
</dbReference>
<dbReference type="InterPro" id="IPR003029">
    <property type="entry name" value="S1_domain"/>
</dbReference>
<dbReference type="NCBIfam" id="TIGR03591">
    <property type="entry name" value="polynuc_phos"/>
    <property type="match status" value="1"/>
</dbReference>
<dbReference type="NCBIfam" id="NF008805">
    <property type="entry name" value="PRK11824.1"/>
    <property type="match status" value="1"/>
</dbReference>
<dbReference type="PANTHER" id="PTHR11252">
    <property type="entry name" value="POLYRIBONUCLEOTIDE NUCLEOTIDYLTRANSFERASE"/>
    <property type="match status" value="1"/>
</dbReference>
<dbReference type="PANTHER" id="PTHR11252:SF0">
    <property type="entry name" value="POLYRIBONUCLEOTIDE NUCLEOTIDYLTRANSFERASE 1, MITOCHONDRIAL"/>
    <property type="match status" value="1"/>
</dbReference>
<dbReference type="Pfam" id="PF00013">
    <property type="entry name" value="KH_1"/>
    <property type="match status" value="1"/>
</dbReference>
<dbReference type="Pfam" id="PF03726">
    <property type="entry name" value="PNPase"/>
    <property type="match status" value="1"/>
</dbReference>
<dbReference type="Pfam" id="PF01138">
    <property type="entry name" value="RNase_PH"/>
    <property type="match status" value="2"/>
</dbReference>
<dbReference type="Pfam" id="PF03725">
    <property type="entry name" value="RNase_PH_C"/>
    <property type="match status" value="1"/>
</dbReference>
<dbReference type="Pfam" id="PF00575">
    <property type="entry name" value="S1"/>
    <property type="match status" value="1"/>
</dbReference>
<dbReference type="PIRSF" id="PIRSF005499">
    <property type="entry name" value="PNPase"/>
    <property type="match status" value="1"/>
</dbReference>
<dbReference type="SMART" id="SM00322">
    <property type="entry name" value="KH"/>
    <property type="match status" value="1"/>
</dbReference>
<dbReference type="SMART" id="SM00316">
    <property type="entry name" value="S1"/>
    <property type="match status" value="1"/>
</dbReference>
<dbReference type="SUPFAM" id="SSF54791">
    <property type="entry name" value="Eukaryotic type KH-domain (KH-domain type I)"/>
    <property type="match status" value="1"/>
</dbReference>
<dbReference type="SUPFAM" id="SSF50249">
    <property type="entry name" value="Nucleic acid-binding proteins"/>
    <property type="match status" value="1"/>
</dbReference>
<dbReference type="SUPFAM" id="SSF46915">
    <property type="entry name" value="Polynucleotide phosphorylase/guanosine pentaphosphate synthase (PNPase/GPSI), domain 3"/>
    <property type="match status" value="1"/>
</dbReference>
<dbReference type="SUPFAM" id="SSF55666">
    <property type="entry name" value="Ribonuclease PH domain 2-like"/>
    <property type="match status" value="2"/>
</dbReference>
<dbReference type="SUPFAM" id="SSF54211">
    <property type="entry name" value="Ribosomal protein S5 domain 2-like"/>
    <property type="match status" value="2"/>
</dbReference>
<dbReference type="PROSITE" id="PS50084">
    <property type="entry name" value="KH_TYPE_1"/>
    <property type="match status" value="1"/>
</dbReference>
<dbReference type="PROSITE" id="PS50126">
    <property type="entry name" value="S1"/>
    <property type="match status" value="1"/>
</dbReference>
<organism>
    <name type="scientific">Anaeromyxobacter dehalogenans (strain 2CP-C)</name>
    <dbReference type="NCBI Taxonomy" id="290397"/>
    <lineage>
        <taxon>Bacteria</taxon>
        <taxon>Pseudomonadati</taxon>
        <taxon>Myxococcota</taxon>
        <taxon>Myxococcia</taxon>
        <taxon>Myxococcales</taxon>
        <taxon>Cystobacterineae</taxon>
        <taxon>Anaeromyxobacteraceae</taxon>
        <taxon>Anaeromyxobacter</taxon>
    </lineage>
</organism>
<proteinExistence type="inferred from homology"/>
<gene>
    <name evidence="1" type="primary">pnp</name>
    <name type="ordered locus">Adeh_1107</name>
</gene>
<sequence length="721" mass="77920">MTPIQKTATVGGKEVLLETGKVAKQAHGSVWVRLGDSIVLVTAVSAAEKKEGIDFFPLTVDYQEKLFAAGRVPGSFFRREGRPTEKETLTSRLVDRSCRPLFAEGYSNETQVIATVISFDQENDTDVLALTGASAALHISDIPFGGPIAGVRVARVGGQLVANPTLAQRADADLDVVMAASRDAIVMVEGGAQEVSEAVMIEALLFGQAAVQPLLDAQDALRAATGNKPRRAFDPPKNDVELRAKVKALTWEKVKEAYGRDEKHDRYGRLSEIKKELLQALKEEAAGDAAKLATIALREKEIKGYYEDVKYDYMRKMITDERRRIGGRGMADIRKITCEVGLLPRVHGSSLFTRGETQALVATTLGTAEDEQRVEMLTGMVFKKFMLHYNFPPFSVGEVKFLRSPGRREIGHGALAERALRAVMPPEDQFPYTVRVVSDIMESNGSSSMASVCGGCLSLMDAGVPIKAPVAGIAMGLIKEGEKIAILSDILGDEDHLGDMDFKVCGTAAGITSIQMDIKIGGVTREILEQALSQAAEGRKHILGEMAKALSAPRGSISAYAPRITTIKIRPERIKDIIGPGGKTIKDITARTGTSINIEDDGSVSIASPNQDKVEEAIKMIRGLTQEAEVGRIYMGTVRKIAEFGAFVEIFPGTDGLIHISELSDKRVKSVSDVLSEGEEVMVKVISVDRSGKIRLSRKEALADSAKKSEGTEPPKGEPAK</sequence>
<evidence type="ECO:0000255" key="1">
    <source>
        <dbReference type="HAMAP-Rule" id="MF_01595"/>
    </source>
</evidence>
<evidence type="ECO:0000256" key="2">
    <source>
        <dbReference type="SAM" id="MobiDB-lite"/>
    </source>
</evidence>
<evidence type="ECO:0000305" key="3"/>
<feature type="chain" id="PRO_0000329498" description="Polyribonucleotide nucleotidyltransferase">
    <location>
        <begin position="1"/>
        <end position="721"/>
    </location>
</feature>
<feature type="domain" description="KH" evidence="1">
    <location>
        <begin position="562"/>
        <end position="621"/>
    </location>
</feature>
<feature type="domain" description="S1 motif" evidence="1">
    <location>
        <begin position="631"/>
        <end position="699"/>
    </location>
</feature>
<feature type="region of interest" description="Disordered" evidence="2">
    <location>
        <begin position="699"/>
        <end position="721"/>
    </location>
</feature>
<feature type="binding site" evidence="1">
    <location>
        <position position="495"/>
    </location>
    <ligand>
        <name>Mg(2+)</name>
        <dbReference type="ChEBI" id="CHEBI:18420"/>
    </ligand>
</feature>
<feature type="binding site" evidence="1">
    <location>
        <position position="501"/>
    </location>
    <ligand>
        <name>Mg(2+)</name>
        <dbReference type="ChEBI" id="CHEBI:18420"/>
    </ligand>
</feature>
<keyword id="KW-0963">Cytoplasm</keyword>
<keyword id="KW-0460">Magnesium</keyword>
<keyword id="KW-0479">Metal-binding</keyword>
<keyword id="KW-0548">Nucleotidyltransferase</keyword>
<keyword id="KW-1185">Reference proteome</keyword>
<keyword id="KW-0694">RNA-binding</keyword>
<keyword id="KW-0808">Transferase</keyword>
<comment type="function">
    <text evidence="1">Involved in mRNA degradation. Catalyzes the phosphorolysis of single-stranded polyribonucleotides processively in the 3'- to 5'-direction.</text>
</comment>
<comment type="catalytic activity">
    <reaction evidence="1">
        <text>RNA(n+1) + phosphate = RNA(n) + a ribonucleoside 5'-diphosphate</text>
        <dbReference type="Rhea" id="RHEA:22096"/>
        <dbReference type="Rhea" id="RHEA-COMP:14527"/>
        <dbReference type="Rhea" id="RHEA-COMP:17342"/>
        <dbReference type="ChEBI" id="CHEBI:43474"/>
        <dbReference type="ChEBI" id="CHEBI:57930"/>
        <dbReference type="ChEBI" id="CHEBI:140395"/>
        <dbReference type="EC" id="2.7.7.8"/>
    </reaction>
</comment>
<comment type="cofactor">
    <cofactor evidence="1">
        <name>Mg(2+)</name>
        <dbReference type="ChEBI" id="CHEBI:18420"/>
    </cofactor>
</comment>
<comment type="subcellular location">
    <subcellularLocation>
        <location evidence="1">Cytoplasm</location>
    </subcellularLocation>
</comment>
<comment type="similarity">
    <text evidence="1">Belongs to the polyribonucleotide nucleotidyltransferase family.</text>
</comment>
<comment type="sequence caution" evidence="3">
    <conflict type="erroneous initiation">
        <sequence resource="EMBL-CDS" id="ABC80882"/>
    </conflict>
</comment>